<feature type="chain" id="PRO_0000438855" description="Sodium-dependent transporter snf-5" evidence="8">
    <location>
        <begin position="1"/>
        <end position="728"/>
    </location>
</feature>
<feature type="topological domain" description="Cytoplasmic" evidence="8">
    <location>
        <begin position="1"/>
        <end position="84"/>
    </location>
</feature>
<feature type="transmembrane region" description="Helical; Name=1" evidence="2">
    <location>
        <begin position="85"/>
        <end position="105"/>
    </location>
</feature>
<feature type="topological domain" description="Extracellular" evidence="8">
    <location>
        <begin position="106"/>
        <end position="119"/>
    </location>
</feature>
<feature type="transmembrane region" description="Helical; Name=2" evidence="2">
    <location>
        <begin position="120"/>
        <end position="140"/>
    </location>
</feature>
<feature type="topological domain" description="Cytoplasmic" evidence="8">
    <location>
        <begin position="141"/>
        <end position="162"/>
    </location>
</feature>
<feature type="transmembrane region" description="Helical; Name=3" evidence="2">
    <location>
        <begin position="163"/>
        <end position="183"/>
    </location>
</feature>
<feature type="topological domain" description="Extracellular" evidence="8">
    <location>
        <begin position="184"/>
        <end position="285"/>
    </location>
</feature>
<feature type="transmembrane region" description="Helical; Name=4" evidence="2">
    <location>
        <begin position="286"/>
        <end position="306"/>
    </location>
</feature>
<feature type="topological domain" description="Cytoplasmic" evidence="8">
    <location>
        <begin position="307"/>
        <end position="314"/>
    </location>
</feature>
<feature type="transmembrane region" description="Helical; Name=5" evidence="2">
    <location>
        <begin position="315"/>
        <end position="335"/>
    </location>
</feature>
<feature type="topological domain" description="Extracellular" evidence="8">
    <location>
        <begin position="336"/>
        <end position="364"/>
    </location>
</feature>
<feature type="transmembrane region" description="Helical; Name=6" evidence="2">
    <location>
        <begin position="365"/>
        <end position="386"/>
    </location>
</feature>
<feature type="topological domain" description="Cytoplasmic" evidence="8">
    <location>
        <begin position="387"/>
        <end position="396"/>
    </location>
</feature>
<feature type="transmembrane region" description="Helical; Name=7" evidence="2">
    <location>
        <begin position="397"/>
        <end position="417"/>
    </location>
</feature>
<feature type="topological domain" description="Extracellular" evidence="8">
    <location>
        <begin position="418"/>
        <end position="451"/>
    </location>
</feature>
<feature type="transmembrane region" description="Helical; Name=8" evidence="2">
    <location>
        <begin position="452"/>
        <end position="472"/>
    </location>
</feature>
<feature type="topological domain" description="Cytoplasmic" evidence="8">
    <location>
        <begin position="473"/>
        <end position="495"/>
    </location>
</feature>
<feature type="transmembrane region" description="Helical; Name=9" evidence="2">
    <location>
        <begin position="496"/>
        <end position="516"/>
    </location>
</feature>
<feature type="topological domain" description="Extracellular" evidence="8">
    <location>
        <begin position="517"/>
        <end position="531"/>
    </location>
</feature>
<feature type="transmembrane region" description="Helical; Name=10" evidence="2">
    <location>
        <begin position="532"/>
        <end position="552"/>
    </location>
</feature>
<feature type="topological domain" description="Cytoplasmic" evidence="8">
    <location>
        <begin position="553"/>
        <end position="578"/>
    </location>
</feature>
<feature type="transmembrane region" description="Helical; Name=11" evidence="2">
    <location>
        <begin position="579"/>
        <end position="599"/>
    </location>
</feature>
<feature type="topological domain" description="Extracellular" evidence="8">
    <location>
        <begin position="600"/>
        <end position="616"/>
    </location>
</feature>
<feature type="transmembrane region" description="Helical; Name=12" evidence="2">
    <location>
        <begin position="617"/>
        <end position="637"/>
    </location>
</feature>
<feature type="topological domain" description="Cytoplasmic" evidence="8">
    <location>
        <begin position="638"/>
        <end position="728"/>
    </location>
</feature>
<feature type="region of interest" description="Disordered" evidence="5">
    <location>
        <begin position="1"/>
        <end position="84"/>
    </location>
</feature>
<feature type="region of interest" description="Disordered" evidence="5">
    <location>
        <begin position="687"/>
        <end position="728"/>
    </location>
</feature>
<feature type="compositionally biased region" description="Low complexity" evidence="5">
    <location>
        <begin position="29"/>
        <end position="50"/>
    </location>
</feature>
<feature type="compositionally biased region" description="Low complexity" evidence="5">
    <location>
        <begin position="60"/>
        <end position="73"/>
    </location>
</feature>
<feature type="compositionally biased region" description="Acidic residues" evidence="5">
    <location>
        <begin position="687"/>
        <end position="699"/>
    </location>
</feature>
<feature type="compositionally biased region" description="Polar residues" evidence="5">
    <location>
        <begin position="718"/>
        <end position="728"/>
    </location>
</feature>
<feature type="binding site" evidence="1">
    <location>
        <position position="97"/>
    </location>
    <ligand>
        <name>Na(+)</name>
        <dbReference type="ChEBI" id="CHEBI:29101"/>
        <label>1</label>
    </ligand>
</feature>
<feature type="binding site" evidence="1">
    <location>
        <position position="99"/>
    </location>
    <ligand>
        <name>Na(+)</name>
        <dbReference type="ChEBI" id="CHEBI:29101"/>
        <label>2</label>
    </ligand>
</feature>
<feature type="binding site" evidence="1">
    <location>
        <position position="100"/>
    </location>
    <ligand>
        <name>Na(+)</name>
        <dbReference type="ChEBI" id="CHEBI:29101"/>
        <label>1</label>
    </ligand>
</feature>
<feature type="binding site" evidence="1">
    <location>
        <position position="104"/>
    </location>
    <ligand>
        <name>Na(+)</name>
        <dbReference type="ChEBI" id="CHEBI:29101"/>
        <label>2</label>
    </ligand>
</feature>
<feature type="binding site" evidence="1">
    <location>
        <position position="372"/>
    </location>
    <ligand>
        <name>Na(+)</name>
        <dbReference type="ChEBI" id="CHEBI:29101"/>
        <label>2</label>
    </ligand>
</feature>
<feature type="binding site" evidence="1">
    <location>
        <position position="469"/>
    </location>
    <ligand>
        <name>Na(+)</name>
        <dbReference type="ChEBI" id="CHEBI:29101"/>
        <label>1</label>
    </ligand>
</feature>
<feature type="glycosylation site" description="N-linked (GlcNAc...) asparagine" evidence="3">
    <location>
        <position position="210"/>
    </location>
</feature>
<feature type="glycosylation site" description="N-linked (GlcNAc...) asparagine" evidence="3">
    <location>
        <position position="225"/>
    </location>
</feature>
<feature type="glycosylation site" description="N-linked (GlcNAc...) asparagine" evidence="3">
    <location>
        <position position="232"/>
    </location>
</feature>
<feature type="glycosylation site" description="N-linked (GlcNAc...) asparagine" evidence="3">
    <location>
        <position position="237"/>
    </location>
</feature>
<feature type="glycosylation site" description="N-linked (GlcNAc...) asparagine" evidence="3">
    <location>
        <position position="257"/>
    </location>
</feature>
<feature type="glycosylation site" description="N-linked (GlcNAc...) asparagine" evidence="3">
    <location>
        <position position="352"/>
    </location>
</feature>
<feature type="disulfide bond" evidence="1">
    <location>
        <begin position="204"/>
        <end position="214"/>
    </location>
</feature>
<organism evidence="11">
    <name type="scientific">Caenorhabditis elegans</name>
    <dbReference type="NCBI Taxonomy" id="6239"/>
    <lineage>
        <taxon>Eukaryota</taxon>
        <taxon>Metazoa</taxon>
        <taxon>Ecdysozoa</taxon>
        <taxon>Nematoda</taxon>
        <taxon>Chromadorea</taxon>
        <taxon>Rhabditida</taxon>
        <taxon>Rhabditina</taxon>
        <taxon>Rhabditomorpha</taxon>
        <taxon>Rhabditoidea</taxon>
        <taxon>Rhabditidae</taxon>
        <taxon>Peloderinae</taxon>
        <taxon>Caenorhabditis</taxon>
    </lineage>
</organism>
<gene>
    <name evidence="12" type="primary">snf-5</name>
    <name evidence="12" type="ORF">Y46G5A.30</name>
</gene>
<dbReference type="EMBL" id="AY825249">
    <property type="protein sequence ID" value="AAX24101.1"/>
    <property type="molecule type" value="mRNA"/>
</dbReference>
<dbReference type="EMBL" id="BX284602">
    <property type="protein sequence ID" value="CAB60372.4"/>
    <property type="molecule type" value="Genomic_DNA"/>
</dbReference>
<dbReference type="RefSeq" id="NP_496735.1">
    <property type="nucleotide sequence ID" value="NM_064334.6"/>
</dbReference>
<dbReference type="SMR" id="G5EBM5"/>
<dbReference type="FunCoup" id="G5EBM5">
    <property type="interactions" value="2"/>
</dbReference>
<dbReference type="STRING" id="6239.Y46G5A.30.1"/>
<dbReference type="GlyCosmos" id="G5EBM5">
    <property type="glycosylation" value="6 sites, No reported glycans"/>
</dbReference>
<dbReference type="PaxDb" id="6239-Y46G5A.30"/>
<dbReference type="EnsemblMetazoa" id="Y46G5A.30.1">
    <property type="protein sequence ID" value="Y46G5A.30.1"/>
    <property type="gene ID" value="WBGene00004904"/>
</dbReference>
<dbReference type="GeneID" id="174923"/>
<dbReference type="KEGG" id="cel:CELE_Y46G5A.30"/>
<dbReference type="AGR" id="WB:WBGene00004904"/>
<dbReference type="CTD" id="174923"/>
<dbReference type="WormBase" id="Y46G5A.30">
    <property type="protein sequence ID" value="CE29609"/>
    <property type="gene ID" value="WBGene00004904"/>
    <property type="gene designation" value="snf-5"/>
</dbReference>
<dbReference type="eggNOG" id="KOG3660">
    <property type="taxonomic scope" value="Eukaryota"/>
</dbReference>
<dbReference type="GeneTree" id="ENSGT00970000196103"/>
<dbReference type="HOGENOM" id="CLU_006855_9_5_1"/>
<dbReference type="InParanoid" id="G5EBM5"/>
<dbReference type="OMA" id="SWISIYM"/>
<dbReference type="OrthoDB" id="6581954at2759"/>
<dbReference type="PhylomeDB" id="G5EBM5"/>
<dbReference type="Reactome" id="R-CEL-352230">
    <property type="pathway name" value="Amino acid transport across the plasma membrane"/>
</dbReference>
<dbReference type="Reactome" id="R-CEL-442660">
    <property type="pathway name" value="Na+/Cl- dependent neurotransmitter transporters"/>
</dbReference>
<dbReference type="PRO" id="PR:G5EBM5"/>
<dbReference type="Proteomes" id="UP000001940">
    <property type="component" value="Chromosome II"/>
</dbReference>
<dbReference type="Bgee" id="WBGene00004904">
    <property type="expression patterns" value="Expressed in adult organism and 1 other cell type or tissue"/>
</dbReference>
<dbReference type="GO" id="GO:0043005">
    <property type="term" value="C:neuron projection"/>
    <property type="evidence" value="ECO:0000318"/>
    <property type="project" value="GO_Central"/>
</dbReference>
<dbReference type="GO" id="GO:0005886">
    <property type="term" value="C:plasma membrane"/>
    <property type="evidence" value="ECO:0000318"/>
    <property type="project" value="GO_Central"/>
</dbReference>
<dbReference type="GO" id="GO:0005332">
    <property type="term" value="F:gamma-aminobutyric acid:sodium:chloride symporter activity"/>
    <property type="evidence" value="ECO:0000318"/>
    <property type="project" value="GO_Central"/>
</dbReference>
<dbReference type="GO" id="GO:0046872">
    <property type="term" value="F:metal ion binding"/>
    <property type="evidence" value="ECO:0007669"/>
    <property type="project" value="UniProtKB-KW"/>
</dbReference>
<dbReference type="GO" id="GO:0006865">
    <property type="term" value="P:amino acid transport"/>
    <property type="evidence" value="ECO:0000318"/>
    <property type="project" value="GO_Central"/>
</dbReference>
<dbReference type="GO" id="GO:0035725">
    <property type="term" value="P:sodium ion transmembrane transport"/>
    <property type="evidence" value="ECO:0000318"/>
    <property type="project" value="GO_Central"/>
</dbReference>
<dbReference type="CDD" id="cd10324">
    <property type="entry name" value="SLC6sbd"/>
    <property type="match status" value="1"/>
</dbReference>
<dbReference type="InterPro" id="IPR000175">
    <property type="entry name" value="Na/ntran_symport"/>
</dbReference>
<dbReference type="InterPro" id="IPR037272">
    <property type="entry name" value="SNS_sf"/>
</dbReference>
<dbReference type="PANTHER" id="PTHR11616:SF326">
    <property type="entry name" value="SODIUM-DEPENDENT TRANSPORTER SNF-5"/>
    <property type="match status" value="1"/>
</dbReference>
<dbReference type="PANTHER" id="PTHR11616">
    <property type="entry name" value="SODIUM/CHLORIDE DEPENDENT TRANSPORTER"/>
    <property type="match status" value="1"/>
</dbReference>
<dbReference type="Pfam" id="PF00209">
    <property type="entry name" value="SNF"/>
    <property type="match status" value="1"/>
</dbReference>
<dbReference type="PRINTS" id="PR00176">
    <property type="entry name" value="NANEUSMPORT"/>
</dbReference>
<dbReference type="SUPFAM" id="SSF161070">
    <property type="entry name" value="SNF-like"/>
    <property type="match status" value="1"/>
</dbReference>
<dbReference type="PROSITE" id="PS50267">
    <property type="entry name" value="NA_NEUROTRAN_SYMP_3"/>
    <property type="match status" value="1"/>
</dbReference>
<reference evidence="10" key="1">
    <citation type="submission" date="2004-11" db="EMBL/GenBank/DDBJ databases">
        <title>Functional identification of snf-5 as a Na+-coupled neutral amino acid transporter in Caenorhabditis elegans.</title>
        <authorList>
            <person name="Jiang G.-L."/>
            <person name="Fei Y.-J."/>
            <person name="Ganapathy V."/>
        </authorList>
    </citation>
    <scope>NUCLEOTIDE SEQUENCE [MRNA]</scope>
</reference>
<reference evidence="11" key="2">
    <citation type="journal article" date="1998" name="Science">
        <title>Genome sequence of the nematode C. elegans: a platform for investigating biology.</title>
        <authorList>
            <consortium name="The C. elegans sequencing consortium"/>
        </authorList>
    </citation>
    <scope>NUCLEOTIDE SEQUENCE [LARGE SCALE GENOMIC DNA]</scope>
    <source>
        <strain evidence="11">Bristol N2</strain>
    </source>
</reference>
<reference evidence="8" key="3">
    <citation type="journal article" date="2013" name="J. Exp. Biol.">
        <title>An SLC6 transporter of the novel B(0,)- system aids in absorption and detection of nutrient amino acids in Caenorhabditis elegans.</title>
        <authorList>
            <person name="Metzler R."/>
            <person name="Meleshkevitch E.A."/>
            <person name="Fox J."/>
            <person name="Kim H."/>
            <person name="Boudko D.Y."/>
        </authorList>
    </citation>
    <scope>FUNCTION</scope>
    <scope>SUBCELLULAR LOCATION</scope>
    <scope>TISSUE SPECIFICITY</scope>
    <scope>DISRUPTION PHENOTYPE</scope>
</reference>
<reference key="4">
    <citation type="journal article" date="2018" name="Front. Mol. Biosci.">
        <title>The Reproduction Rate of Peptide Transporter PEPT-1 Deficient C. elegans Is Dependent on Dietary Glutamate Supply.</title>
        <authorList>
            <person name="Spanier B."/>
            <person name="Wallwitz J."/>
            <person name="Zapoglou D."/>
            <person name="Idrissou B.M.G."/>
            <person name="Fischer C."/>
            <person name="Troll M."/>
            <person name="Petzold K."/>
            <person name="Daniel H."/>
        </authorList>
    </citation>
    <scope>FUNCTION</scope>
    <scope>DISRUPTION PHENOTYPE</scope>
</reference>
<sequence length="728" mass="81692">MADSGSNEEAMKRQAPSVKFDSPSKPDPQQVSQQSNQLSSQKSIQQSTQSKIDPSRIDTKNTTVTTTRPTLDTPPEEEEEKRDGFGNSFEFVLTSLGLAVGLGNIWRFPTRAYNNGGSAFLIPYLTCAFLFGLPAVYFEFLTGQYQGKSPPVIFRRVRPILEGVGWMGVFVAALVAIYYIVIVSWISIYMINICRGHFALWSHCNNDWNNGTSCITMADQYLCKNHTKVMANSTLWNSSLPIPDKMVYFNGACQDANGTDVSTATEQYFMTYIVQPSSGMLDFGGFNWPVFAAMSVCWLLTGLGILKGAKIMGKISYVSVLVPYVLVVVLFINGVFQDGSGVGLEMYFGTPNYTKLYEQDTWTEALKQLCFSLSVGHGGLISLSSYSPKRNNIFRDALIVIIGDTTMSLVGGGAVFATLGYLAKATGQDVKDVVKSGLSLAFVVYPEAMTRMPVPWLWCFIFFLMLFLLGASTEIALVDVFCSCIYDQYPRFRNRKWIVVIAWCSVLYCIGLVFSTRAGYYWFEMFDEYAAGFSSVCTVVCELLVMMYIYGFRNVRDDITEVVGHARNKFTGAIGAHSWYFTANWMVISPSIALILVGLSFVREYPYMGRHDIYPAVFDIFGWFLSFLPVIIVPIFMLLNFIRCRNRGHSYRTLFMLQKQHASYRRIAANYSKDQLALQDQLPDKEPWDEENVDLTDSESESRNAASGDVPIDDVATIDTSSTYHQVY</sequence>
<name>SNF5_CAEEL</name>
<keyword id="KW-0029">Amino-acid transport</keyword>
<keyword id="KW-1003">Cell membrane</keyword>
<keyword id="KW-1015">Disulfide bond</keyword>
<keyword id="KW-0325">Glycoprotein</keyword>
<keyword id="KW-0472">Membrane</keyword>
<keyword id="KW-0479">Metal-binding</keyword>
<keyword id="KW-1185">Reference proteome</keyword>
<keyword id="KW-0915">Sodium</keyword>
<keyword id="KW-0769">Symport</keyword>
<keyword id="KW-0812">Transmembrane</keyword>
<keyword id="KW-1133">Transmembrane helix</keyword>
<keyword id="KW-0813">Transport</keyword>
<protein>
    <recommendedName>
        <fullName evidence="8">Sodium-dependent transporter snf-5</fullName>
    </recommendedName>
    <alternativeName>
        <fullName evidence="12">Sodium:neurotransmitter symporter family protein 5</fullName>
    </alternativeName>
</protein>
<comment type="function">
    <text evidence="6 7 9">Sodium-dependent amino acid transporter that mediates the uptake of the L-enantiomers of various amino acids, including L-proline and L-methionine, and also of acidic amino acids such as L-glutamic acid and L-aspartic acid (Probable) (PubMed:23580723). May additionally have a role in potassium-dependent amino acid absorption (PubMed:23580723). In response to the availability of amino acid nutrients, may play a role in dauer formation (PubMed:23580723). May play a role in promoting fertility (PubMed:30560135).</text>
</comment>
<comment type="subcellular location">
    <subcellularLocation>
        <location evidence="6">Cell membrane</location>
        <topology evidence="2">Multi-pass membrane protein</topology>
    </subcellularLocation>
</comment>
<comment type="tissue specificity">
    <text evidence="6">Expressed in the INT-9 cells and posterior cells of the alimentary canal of the intestine, gut epithelial cells, the pharynx of some worms, two cells of the rectal gland, and in DVA, DVB and DVC neurons and amphid sensory neurons ASI, ADF and ASK neurons.</text>
</comment>
<comment type="disruption phenotype">
    <text evidence="6 7">Impaired capacity to form and maintain dauer larvae upon starvation (PubMed:23580723). RNAi-mediated knockdown in a pept-1 (lg601) mutant background results in a reduced number of progeny (PubMed:30560135). Dietary supplementation with glutamate does not rescue this phenotype (PubMed:30560135).</text>
</comment>
<comment type="similarity">
    <text evidence="4">Belongs to the sodium:neurotransmitter symporter (SNF) (TC 2.A.22) family.</text>
</comment>
<accession>G5EBM5</accession>
<proteinExistence type="evidence at transcript level"/>
<evidence type="ECO:0000250" key="1">
    <source>
        <dbReference type="UniProtKB" id="Q7K4Y6"/>
    </source>
</evidence>
<evidence type="ECO:0000255" key="2"/>
<evidence type="ECO:0000255" key="3">
    <source>
        <dbReference type="PROSITE-ProRule" id="PRU00498"/>
    </source>
</evidence>
<evidence type="ECO:0000255" key="4">
    <source>
        <dbReference type="RuleBase" id="RU003732"/>
    </source>
</evidence>
<evidence type="ECO:0000256" key="5">
    <source>
        <dbReference type="SAM" id="MobiDB-lite"/>
    </source>
</evidence>
<evidence type="ECO:0000269" key="6">
    <source>
    </source>
</evidence>
<evidence type="ECO:0000269" key="7">
    <source>
    </source>
</evidence>
<evidence type="ECO:0000305" key="8"/>
<evidence type="ECO:0000305" key="9">
    <source>
    </source>
</evidence>
<evidence type="ECO:0000312" key="10">
    <source>
        <dbReference type="EMBL" id="AAX24101.1"/>
    </source>
</evidence>
<evidence type="ECO:0000312" key="11">
    <source>
        <dbReference type="Proteomes" id="UP000001940"/>
    </source>
</evidence>
<evidence type="ECO:0000312" key="12">
    <source>
        <dbReference type="WormBase" id="Y46G5A.30"/>
    </source>
</evidence>